<comment type="function">
    <text evidence="1">Acts as a regulator of cilium basal body docking and positioning in mono- and multiciliated cells.</text>
</comment>
<comment type="subcellular location">
    <subcellularLocation>
        <location evidence="1">Cytoplasm</location>
        <location evidence="1">Cytoskeleton</location>
        <location evidence="1">Cilium basal body</location>
    </subcellularLocation>
    <subcellularLocation>
        <location evidence="1">Cell projection</location>
        <location evidence="1">Cilium</location>
    </subcellularLocation>
    <subcellularLocation>
        <location evidence="1">Apical cell membrane</location>
    </subcellularLocation>
    <text evidence="1">Localizes to the apical cell membrane, the basal body and the primary cilium in monociliated node cells.</text>
</comment>
<comment type="similarity">
    <text evidence="3">Belongs to the Flattop family.</text>
</comment>
<proteinExistence type="inferred from homology"/>
<accession>A7RR34</accession>
<reference key="1">
    <citation type="journal article" date="2007" name="Science">
        <title>Sea anemone genome reveals ancestral eumetazoan gene repertoire and genomic organization.</title>
        <authorList>
            <person name="Putnam N.H."/>
            <person name="Srivastava M."/>
            <person name="Hellsten U."/>
            <person name="Dirks B."/>
            <person name="Chapman J."/>
            <person name="Salamov A."/>
            <person name="Terry A."/>
            <person name="Shapiro H."/>
            <person name="Lindquist E."/>
            <person name="Kapitonov V.V."/>
            <person name="Jurka J."/>
            <person name="Genikhovich G."/>
            <person name="Grigoriev I.V."/>
            <person name="Lucas S.M."/>
            <person name="Steele R.E."/>
            <person name="Finnerty J.R."/>
            <person name="Technau U."/>
            <person name="Martindale M.Q."/>
            <person name="Rokhsar D.S."/>
        </authorList>
    </citation>
    <scope>NUCLEOTIDE SEQUENCE [LARGE SCALE GENOMIC DNA]</scope>
    <source>
        <strain>CH2 X CH6</strain>
    </source>
</reference>
<name>FLTOP_NEMVE</name>
<sequence length="169" mass="18527">MSTHFSANQYEKSFDAKRLQNWEVPKHFKEHPSSLEGFTQIISNDRGHILEGIPRSSRSPWGEFVGTWDMTKPPLRTKTLKTKAMTENAQQKRKSASPKQEVARTPSPAKASPRRDSPVQASPRNASPLQGSPKKASAEKVCTPSPKAASVSPVANKSPSPKLATPEPC</sequence>
<evidence type="ECO:0000250" key="1">
    <source>
        <dbReference type="UniProtKB" id="Q6P8X9"/>
    </source>
</evidence>
<evidence type="ECO:0000256" key="2">
    <source>
        <dbReference type="SAM" id="MobiDB-lite"/>
    </source>
</evidence>
<evidence type="ECO:0000305" key="3"/>
<keyword id="KW-1003">Cell membrane</keyword>
<keyword id="KW-0966">Cell projection</keyword>
<keyword id="KW-0970">Cilium biogenesis/degradation</keyword>
<keyword id="KW-0963">Cytoplasm</keyword>
<keyword id="KW-0206">Cytoskeleton</keyword>
<keyword id="KW-0472">Membrane</keyword>
<keyword id="KW-1185">Reference proteome</keyword>
<gene>
    <name type="ORF">v1g200856</name>
</gene>
<feature type="chain" id="PRO_0000371810" description="Protein Flattop homolog">
    <location>
        <begin position="1"/>
        <end position="169"/>
    </location>
</feature>
<feature type="region of interest" description="Disordered" evidence="2">
    <location>
        <begin position="53"/>
        <end position="169"/>
    </location>
</feature>
<feature type="compositionally biased region" description="Polar residues" evidence="2">
    <location>
        <begin position="119"/>
        <end position="130"/>
    </location>
</feature>
<protein>
    <recommendedName>
        <fullName evidence="3">Protein Flattop homolog</fullName>
    </recommendedName>
    <alternativeName>
        <fullName evidence="1">Cilia- and flagella-associated protein 126</fullName>
    </alternativeName>
</protein>
<dbReference type="EMBL" id="DS469530">
    <property type="protein sequence ID" value="EDO46098.1"/>
    <property type="molecule type" value="Genomic_DNA"/>
</dbReference>
<dbReference type="RefSeq" id="XP_001638161.1">
    <property type="nucleotide sequence ID" value="XM_001638111.1"/>
</dbReference>
<dbReference type="SMR" id="A7RR34"/>
<dbReference type="STRING" id="45351.A7RR34"/>
<dbReference type="EnsemblMetazoa" id="EDO46098">
    <property type="protein sequence ID" value="EDO46098"/>
    <property type="gene ID" value="NEMVEDRAFT_v1g200856"/>
</dbReference>
<dbReference type="KEGG" id="nve:5518189"/>
<dbReference type="eggNOG" id="ENOG502S5M4">
    <property type="taxonomic scope" value="Eukaryota"/>
</dbReference>
<dbReference type="HOGENOM" id="CLU_108980_0_0_1"/>
<dbReference type="InParanoid" id="A7RR34"/>
<dbReference type="OMA" id="SNDQGHI"/>
<dbReference type="OrthoDB" id="521617at2759"/>
<dbReference type="PhylomeDB" id="A7RR34"/>
<dbReference type="Proteomes" id="UP000001593">
    <property type="component" value="Unassembled WGS sequence"/>
</dbReference>
<dbReference type="GO" id="GO:0016324">
    <property type="term" value="C:apical plasma membrane"/>
    <property type="evidence" value="ECO:0000250"/>
    <property type="project" value="UniProtKB"/>
</dbReference>
<dbReference type="GO" id="GO:0036064">
    <property type="term" value="C:ciliary basal body"/>
    <property type="evidence" value="ECO:0000250"/>
    <property type="project" value="UniProtKB"/>
</dbReference>
<dbReference type="GO" id="GO:0005929">
    <property type="term" value="C:cilium"/>
    <property type="evidence" value="ECO:0000250"/>
    <property type="project" value="UniProtKB"/>
</dbReference>
<dbReference type="GO" id="GO:0005737">
    <property type="term" value="C:cytoplasm"/>
    <property type="evidence" value="ECO:0007669"/>
    <property type="project" value="UniProtKB-KW"/>
</dbReference>
<dbReference type="GO" id="GO:0044782">
    <property type="term" value="P:cilium organization"/>
    <property type="evidence" value="ECO:0000250"/>
    <property type="project" value="UniProtKB"/>
</dbReference>
<dbReference type="CDD" id="cd23705">
    <property type="entry name" value="Flattop"/>
    <property type="match status" value="1"/>
</dbReference>
<dbReference type="InterPro" id="IPR038797">
    <property type="entry name" value="Fltp"/>
</dbReference>
<dbReference type="PANTHER" id="PTHR34639">
    <property type="entry name" value="PROTEIN FLATTOP"/>
    <property type="match status" value="1"/>
</dbReference>
<dbReference type="PANTHER" id="PTHR34639:SF1">
    <property type="entry name" value="PROTEIN FLATTOP"/>
    <property type="match status" value="1"/>
</dbReference>
<dbReference type="Pfam" id="PF22611">
    <property type="entry name" value="CFAP126"/>
    <property type="match status" value="1"/>
</dbReference>
<organism>
    <name type="scientific">Nematostella vectensis</name>
    <name type="common">Starlet sea anemone</name>
    <dbReference type="NCBI Taxonomy" id="45351"/>
    <lineage>
        <taxon>Eukaryota</taxon>
        <taxon>Metazoa</taxon>
        <taxon>Cnidaria</taxon>
        <taxon>Anthozoa</taxon>
        <taxon>Hexacorallia</taxon>
        <taxon>Actiniaria</taxon>
        <taxon>Edwardsiidae</taxon>
        <taxon>Nematostella</taxon>
    </lineage>
</organism>